<keyword id="KW-0067">ATP-binding</keyword>
<keyword id="KW-0997">Cell inner membrane</keyword>
<keyword id="KW-1003">Cell membrane</keyword>
<keyword id="KW-0418">Kinase</keyword>
<keyword id="KW-0472">Membrane</keyword>
<keyword id="KW-0547">Nucleotide-binding</keyword>
<keyword id="KW-0808">Transferase</keyword>
<keyword id="KW-0812">Transmembrane</keyword>
<keyword id="KW-1133">Transmembrane helix</keyword>
<keyword id="KW-0831">Ubiquinone biosynthesis</keyword>
<evidence type="ECO:0000255" key="1">
    <source>
        <dbReference type="HAMAP-Rule" id="MF_00414"/>
    </source>
</evidence>
<gene>
    <name evidence="1" type="primary">ubiB</name>
    <name type="ordered locus">VSAL_I2998</name>
</gene>
<organism>
    <name type="scientific">Aliivibrio salmonicida (strain LFI1238)</name>
    <name type="common">Vibrio salmonicida (strain LFI1238)</name>
    <dbReference type="NCBI Taxonomy" id="316275"/>
    <lineage>
        <taxon>Bacteria</taxon>
        <taxon>Pseudomonadati</taxon>
        <taxon>Pseudomonadota</taxon>
        <taxon>Gammaproteobacteria</taxon>
        <taxon>Vibrionales</taxon>
        <taxon>Vibrionaceae</taxon>
        <taxon>Aliivibrio</taxon>
    </lineage>
</organism>
<proteinExistence type="inferred from homology"/>
<accession>B6EHA6</accession>
<dbReference type="EC" id="2.7.-.-" evidence="1"/>
<dbReference type="EMBL" id="FM178379">
    <property type="protein sequence ID" value="CAQ80682.1"/>
    <property type="molecule type" value="Genomic_DNA"/>
</dbReference>
<dbReference type="RefSeq" id="WP_012551399.1">
    <property type="nucleotide sequence ID" value="NC_011312.1"/>
</dbReference>
<dbReference type="SMR" id="B6EHA6"/>
<dbReference type="KEGG" id="vsa:VSAL_I2998"/>
<dbReference type="eggNOG" id="COG0661">
    <property type="taxonomic scope" value="Bacteria"/>
</dbReference>
<dbReference type="HOGENOM" id="CLU_006533_0_0_6"/>
<dbReference type="UniPathway" id="UPA00232"/>
<dbReference type="Proteomes" id="UP000001730">
    <property type="component" value="Chromosome 1"/>
</dbReference>
<dbReference type="GO" id="GO:0005886">
    <property type="term" value="C:plasma membrane"/>
    <property type="evidence" value="ECO:0007669"/>
    <property type="project" value="UniProtKB-SubCell"/>
</dbReference>
<dbReference type="GO" id="GO:0005524">
    <property type="term" value="F:ATP binding"/>
    <property type="evidence" value="ECO:0007669"/>
    <property type="project" value="UniProtKB-KW"/>
</dbReference>
<dbReference type="GO" id="GO:0004672">
    <property type="term" value="F:protein kinase activity"/>
    <property type="evidence" value="ECO:0007669"/>
    <property type="project" value="UniProtKB-UniRule"/>
</dbReference>
<dbReference type="GO" id="GO:0010795">
    <property type="term" value="P:regulation of ubiquinone biosynthetic process"/>
    <property type="evidence" value="ECO:0007669"/>
    <property type="project" value="UniProtKB-UniRule"/>
</dbReference>
<dbReference type="GO" id="GO:0006744">
    <property type="term" value="P:ubiquinone biosynthetic process"/>
    <property type="evidence" value="ECO:0007669"/>
    <property type="project" value="UniProtKB-UniPathway"/>
</dbReference>
<dbReference type="CDD" id="cd13972">
    <property type="entry name" value="UbiB"/>
    <property type="match status" value="1"/>
</dbReference>
<dbReference type="HAMAP" id="MF_00414">
    <property type="entry name" value="UbiB"/>
    <property type="match status" value="1"/>
</dbReference>
<dbReference type="InterPro" id="IPR004147">
    <property type="entry name" value="ABC1_dom"/>
</dbReference>
<dbReference type="InterPro" id="IPR011009">
    <property type="entry name" value="Kinase-like_dom_sf"/>
</dbReference>
<dbReference type="InterPro" id="IPR010232">
    <property type="entry name" value="UbiB"/>
</dbReference>
<dbReference type="InterPro" id="IPR045308">
    <property type="entry name" value="UbiB_bact"/>
</dbReference>
<dbReference type="InterPro" id="IPR050154">
    <property type="entry name" value="UbiB_kinase"/>
</dbReference>
<dbReference type="NCBIfam" id="NF003404">
    <property type="entry name" value="PRK04750.1"/>
    <property type="match status" value="1"/>
</dbReference>
<dbReference type="NCBIfam" id="TIGR01982">
    <property type="entry name" value="UbiB"/>
    <property type="match status" value="1"/>
</dbReference>
<dbReference type="PANTHER" id="PTHR10566">
    <property type="entry name" value="CHAPERONE-ACTIVITY OF BC1 COMPLEX CABC1 -RELATED"/>
    <property type="match status" value="1"/>
</dbReference>
<dbReference type="PANTHER" id="PTHR10566:SF113">
    <property type="entry name" value="PROTEIN ACTIVITY OF BC1 COMPLEX KINASE 7, CHLOROPLASTIC"/>
    <property type="match status" value="1"/>
</dbReference>
<dbReference type="Pfam" id="PF03109">
    <property type="entry name" value="ABC1"/>
    <property type="match status" value="1"/>
</dbReference>
<dbReference type="SUPFAM" id="SSF56112">
    <property type="entry name" value="Protein kinase-like (PK-like)"/>
    <property type="match status" value="1"/>
</dbReference>
<reference key="1">
    <citation type="journal article" date="2008" name="BMC Genomics">
        <title>The genome sequence of the fish pathogen Aliivibrio salmonicida strain LFI1238 shows extensive evidence of gene decay.</title>
        <authorList>
            <person name="Hjerde E."/>
            <person name="Lorentzen M.S."/>
            <person name="Holden M.T."/>
            <person name="Seeger K."/>
            <person name="Paulsen S."/>
            <person name="Bason N."/>
            <person name="Churcher C."/>
            <person name="Harris D."/>
            <person name="Norbertczak H."/>
            <person name="Quail M.A."/>
            <person name="Sanders S."/>
            <person name="Thurston S."/>
            <person name="Parkhill J."/>
            <person name="Willassen N.P."/>
            <person name="Thomson N.R."/>
        </authorList>
    </citation>
    <scope>NUCLEOTIDE SEQUENCE [LARGE SCALE GENOMIC DNA]</scope>
    <source>
        <strain>LFI1238</strain>
    </source>
</reference>
<comment type="function">
    <text evidence="1">Is probably a protein kinase regulator of UbiI activity which is involved in aerobic coenzyme Q (ubiquinone) biosynthesis.</text>
</comment>
<comment type="pathway">
    <text>Cofactor biosynthesis; ubiquinone biosynthesis [regulation].</text>
</comment>
<comment type="subcellular location">
    <subcellularLocation>
        <location evidence="1">Cell inner membrane</location>
        <topology evidence="1">Single-pass membrane protein</topology>
    </subcellularLocation>
</comment>
<comment type="similarity">
    <text evidence="1">Belongs to the ABC1 family. UbiB subfamily.</text>
</comment>
<feature type="chain" id="PRO_1000123889" description="Probable protein kinase UbiB">
    <location>
        <begin position="1"/>
        <end position="543"/>
    </location>
</feature>
<feature type="transmembrane region" description="Helical" evidence="1">
    <location>
        <begin position="517"/>
        <end position="539"/>
    </location>
</feature>
<feature type="domain" description="Protein kinase" evidence="1">
    <location>
        <begin position="123"/>
        <end position="501"/>
    </location>
</feature>
<feature type="active site" description="Proton acceptor" evidence="1">
    <location>
        <position position="287"/>
    </location>
</feature>
<feature type="binding site" evidence="1">
    <location>
        <begin position="129"/>
        <end position="137"/>
    </location>
    <ligand>
        <name>ATP</name>
        <dbReference type="ChEBI" id="CHEBI:30616"/>
    </ligand>
</feature>
<feature type="binding site" evidence="1">
    <location>
        <position position="152"/>
    </location>
    <ligand>
        <name>ATP</name>
        <dbReference type="ChEBI" id="CHEBI:30616"/>
    </ligand>
</feature>
<protein>
    <recommendedName>
        <fullName evidence="1">Probable protein kinase UbiB</fullName>
        <ecNumber evidence="1">2.7.-.-</ecNumber>
    </recommendedName>
    <alternativeName>
        <fullName evidence="1">Ubiquinone biosynthesis protein UbiB</fullName>
    </alternativeName>
</protein>
<name>UBIB_ALISL</name>
<sequence>MTPSELKRLYQITKVQLEYGLDELLPDHALTQLPKRLRKGLFWIKNRYPEKPLGERLRLALQELGPVWIKFGQMMSTRRDLFPPHLADQLALLQDQVAPFDGQLAKDQMELSLGGPLENWFTDFDIVPLASASIAQVHTAKLKESGREIVLKVIRPDIRPVIEADIRLMYRMATLVEKHIPEARRLKPVEVIEEYEKTLIDELDLRREASNAMQLRRNFEGSEELYVPEVILDVSSEHLMVSERIYGIQVSDIEQLEKNGTNMKLLAERGVSVFFTQVFRDSFFHADMHPGNVFVNPDNPENPQWIGLDCGIVGTLNKEDKRYLAENLLGFFNSDYRKVAQLHIDSGWVPAETNVEEFEFAIRIVCEPIFAKPLGEISFGHVLLNLFNTARRFNMEVQPQLVLLQKTLLYVEGLGRQLYPQLDLWATAKPFLETWMAKQIGPAAFLTALTEKAPFWAEKLPELPDLVYDSLRQGKVLNQRMDKLYAGYRQSKRQQAKGQFLFNVGATLLICSAVLLTSNITALASISAATGVTFWLLSWRAYR</sequence>